<reference key="1">
    <citation type="journal article" date="2009" name="PLoS Genet.">
        <title>Organised genome dynamics in the Escherichia coli species results in highly diverse adaptive paths.</title>
        <authorList>
            <person name="Touchon M."/>
            <person name="Hoede C."/>
            <person name="Tenaillon O."/>
            <person name="Barbe V."/>
            <person name="Baeriswyl S."/>
            <person name="Bidet P."/>
            <person name="Bingen E."/>
            <person name="Bonacorsi S."/>
            <person name="Bouchier C."/>
            <person name="Bouvet O."/>
            <person name="Calteau A."/>
            <person name="Chiapello H."/>
            <person name="Clermont O."/>
            <person name="Cruveiller S."/>
            <person name="Danchin A."/>
            <person name="Diard M."/>
            <person name="Dossat C."/>
            <person name="Karoui M.E."/>
            <person name="Frapy E."/>
            <person name="Garry L."/>
            <person name="Ghigo J.M."/>
            <person name="Gilles A.M."/>
            <person name="Johnson J."/>
            <person name="Le Bouguenec C."/>
            <person name="Lescat M."/>
            <person name="Mangenot S."/>
            <person name="Martinez-Jehanne V."/>
            <person name="Matic I."/>
            <person name="Nassif X."/>
            <person name="Oztas S."/>
            <person name="Petit M.A."/>
            <person name="Pichon C."/>
            <person name="Rouy Z."/>
            <person name="Ruf C.S."/>
            <person name="Schneider D."/>
            <person name="Tourret J."/>
            <person name="Vacherie B."/>
            <person name="Vallenet D."/>
            <person name="Medigue C."/>
            <person name="Rocha E.P.C."/>
            <person name="Denamur E."/>
        </authorList>
    </citation>
    <scope>NUCLEOTIDE SEQUENCE [LARGE SCALE GENOMIC DNA]</scope>
    <source>
        <strain>IAI39 / ExPEC</strain>
    </source>
</reference>
<organism>
    <name type="scientific">Escherichia coli O7:K1 (strain IAI39 / ExPEC)</name>
    <dbReference type="NCBI Taxonomy" id="585057"/>
    <lineage>
        <taxon>Bacteria</taxon>
        <taxon>Pseudomonadati</taxon>
        <taxon>Pseudomonadota</taxon>
        <taxon>Gammaproteobacteria</taxon>
        <taxon>Enterobacterales</taxon>
        <taxon>Enterobacteriaceae</taxon>
        <taxon>Escherichia</taxon>
    </lineage>
</organism>
<sequence>MIKQRTLKRIVQATGVGLHTGKKVTLTLRPAPANTGVIYRRTDLNPPVDFPADAKSVRDTMLCTCLVNEHDVRISTVEHLNAALAGLGIDNIVIEVNAPEIPIMDGSAAPFVYLLLDAGIDELNCAKKFVRIKETVRVEDGDKWAEFKPYNGFSLDFTIDFNHPAIDSSNQRYAMNFSADAFMRQISRARTFGFMRDIEYLQSRGLCLGGSFDCAIVVDDYRVLNEDGLRFEDEFVRHKMLDAIGDLFMCGHNIIGAFTAYKSGHALNNKLLQAVLAKQEAWEYVTFQDDAELPLAFKAPSAVLA</sequence>
<proteinExistence type="inferred from homology"/>
<protein>
    <recommendedName>
        <fullName evidence="1">UDP-3-O-acyl-N-acetylglucosamine deacetylase</fullName>
        <shortName evidence="1">UDP-3-O-acyl-GlcNAc deacetylase</shortName>
        <ecNumber evidence="1">3.5.1.108</ecNumber>
    </recommendedName>
    <alternativeName>
        <fullName evidence="1">UDP-3-O-[R-3-hydroxymyristoyl]-N-acetylglucosamine deacetylase</fullName>
    </alternativeName>
</protein>
<accession>B7NHK2</accession>
<keyword id="KW-0378">Hydrolase</keyword>
<keyword id="KW-0441">Lipid A biosynthesis</keyword>
<keyword id="KW-0444">Lipid biosynthesis</keyword>
<keyword id="KW-0443">Lipid metabolism</keyword>
<keyword id="KW-0479">Metal-binding</keyword>
<keyword id="KW-0862">Zinc</keyword>
<evidence type="ECO:0000255" key="1">
    <source>
        <dbReference type="HAMAP-Rule" id="MF_00388"/>
    </source>
</evidence>
<feature type="chain" id="PRO_1000122781" description="UDP-3-O-acyl-N-acetylglucosamine deacetylase">
    <location>
        <begin position="1"/>
        <end position="305"/>
    </location>
</feature>
<feature type="active site" description="Proton donor" evidence="1">
    <location>
        <position position="265"/>
    </location>
</feature>
<feature type="binding site" evidence="1">
    <location>
        <position position="79"/>
    </location>
    <ligand>
        <name>Zn(2+)</name>
        <dbReference type="ChEBI" id="CHEBI:29105"/>
    </ligand>
</feature>
<feature type="binding site" evidence="1">
    <location>
        <position position="238"/>
    </location>
    <ligand>
        <name>Zn(2+)</name>
        <dbReference type="ChEBI" id="CHEBI:29105"/>
    </ligand>
</feature>
<feature type="binding site" evidence="1">
    <location>
        <position position="242"/>
    </location>
    <ligand>
        <name>Zn(2+)</name>
        <dbReference type="ChEBI" id="CHEBI:29105"/>
    </ligand>
</feature>
<name>LPXC_ECO7I</name>
<dbReference type="EC" id="3.5.1.108" evidence="1"/>
<dbReference type="EMBL" id="CU928164">
    <property type="protein sequence ID" value="CAR16240.1"/>
    <property type="molecule type" value="Genomic_DNA"/>
</dbReference>
<dbReference type="RefSeq" id="WP_000595482.1">
    <property type="nucleotide sequence ID" value="NC_011750.1"/>
</dbReference>
<dbReference type="RefSeq" id="YP_002406148.1">
    <property type="nucleotide sequence ID" value="NC_011750.1"/>
</dbReference>
<dbReference type="SMR" id="B7NHK2"/>
<dbReference type="STRING" id="585057.ECIAI39_0099"/>
<dbReference type="GeneID" id="93777338"/>
<dbReference type="KEGG" id="ect:ECIAI39_0099"/>
<dbReference type="PATRIC" id="fig|585057.6.peg.108"/>
<dbReference type="HOGENOM" id="CLU_046528_1_0_6"/>
<dbReference type="UniPathway" id="UPA00359">
    <property type="reaction ID" value="UER00478"/>
</dbReference>
<dbReference type="Proteomes" id="UP000000749">
    <property type="component" value="Chromosome"/>
</dbReference>
<dbReference type="GO" id="GO:0016020">
    <property type="term" value="C:membrane"/>
    <property type="evidence" value="ECO:0007669"/>
    <property type="project" value="GOC"/>
</dbReference>
<dbReference type="GO" id="GO:0046872">
    <property type="term" value="F:metal ion binding"/>
    <property type="evidence" value="ECO:0007669"/>
    <property type="project" value="UniProtKB-KW"/>
</dbReference>
<dbReference type="GO" id="GO:0103117">
    <property type="term" value="F:UDP-3-O-acyl-N-acetylglucosamine deacetylase activity"/>
    <property type="evidence" value="ECO:0007669"/>
    <property type="project" value="UniProtKB-UniRule"/>
</dbReference>
<dbReference type="GO" id="GO:0009245">
    <property type="term" value="P:lipid A biosynthetic process"/>
    <property type="evidence" value="ECO:0007669"/>
    <property type="project" value="UniProtKB-UniRule"/>
</dbReference>
<dbReference type="FunFam" id="3.30.1700.10:FF:000001">
    <property type="entry name" value="UDP-3-O-acyl-N-acetylglucosamine deacetylase"/>
    <property type="match status" value="1"/>
</dbReference>
<dbReference type="FunFam" id="3.30.230.20:FF:000001">
    <property type="entry name" value="UDP-3-O-acyl-N-acetylglucosamine deacetylase"/>
    <property type="match status" value="1"/>
</dbReference>
<dbReference type="Gene3D" id="3.30.230.20">
    <property type="entry name" value="lpxc deacetylase, domain 1"/>
    <property type="match status" value="1"/>
</dbReference>
<dbReference type="Gene3D" id="3.30.1700.10">
    <property type="entry name" value="lpxc deacetylase, domain 2"/>
    <property type="match status" value="1"/>
</dbReference>
<dbReference type="HAMAP" id="MF_00388">
    <property type="entry name" value="LpxC"/>
    <property type="match status" value="1"/>
</dbReference>
<dbReference type="InterPro" id="IPR020568">
    <property type="entry name" value="Ribosomal_Su5_D2-typ_SF"/>
</dbReference>
<dbReference type="InterPro" id="IPR004463">
    <property type="entry name" value="UDP-acyl_GlcNac_deAcase"/>
</dbReference>
<dbReference type="InterPro" id="IPR011334">
    <property type="entry name" value="UDP-acyl_GlcNac_deAcase_C"/>
</dbReference>
<dbReference type="InterPro" id="IPR015870">
    <property type="entry name" value="UDP-acyl_N-AcGlcN_deAcase_N"/>
</dbReference>
<dbReference type="NCBIfam" id="TIGR00325">
    <property type="entry name" value="lpxC"/>
    <property type="match status" value="1"/>
</dbReference>
<dbReference type="PANTHER" id="PTHR33694">
    <property type="entry name" value="UDP-3-O-ACYL-N-ACETYLGLUCOSAMINE DEACETYLASE 1, MITOCHONDRIAL-RELATED"/>
    <property type="match status" value="1"/>
</dbReference>
<dbReference type="PANTHER" id="PTHR33694:SF1">
    <property type="entry name" value="UDP-3-O-ACYL-N-ACETYLGLUCOSAMINE DEACETYLASE 1, MITOCHONDRIAL-RELATED"/>
    <property type="match status" value="1"/>
</dbReference>
<dbReference type="Pfam" id="PF03331">
    <property type="entry name" value="LpxC"/>
    <property type="match status" value="1"/>
</dbReference>
<dbReference type="SUPFAM" id="SSF54211">
    <property type="entry name" value="Ribosomal protein S5 domain 2-like"/>
    <property type="match status" value="2"/>
</dbReference>
<comment type="function">
    <text evidence="1">Catalyzes the hydrolysis of UDP-3-O-myristoyl-N-acetylglucosamine to form UDP-3-O-myristoylglucosamine and acetate, the committed step in lipid A biosynthesis.</text>
</comment>
<comment type="catalytic activity">
    <reaction evidence="1">
        <text>a UDP-3-O-[(3R)-3-hydroxyacyl]-N-acetyl-alpha-D-glucosamine + H2O = a UDP-3-O-[(3R)-3-hydroxyacyl]-alpha-D-glucosamine + acetate</text>
        <dbReference type="Rhea" id="RHEA:67816"/>
        <dbReference type="ChEBI" id="CHEBI:15377"/>
        <dbReference type="ChEBI" id="CHEBI:30089"/>
        <dbReference type="ChEBI" id="CHEBI:137740"/>
        <dbReference type="ChEBI" id="CHEBI:173225"/>
        <dbReference type="EC" id="3.5.1.108"/>
    </reaction>
</comment>
<comment type="cofactor">
    <cofactor evidence="1">
        <name>Zn(2+)</name>
        <dbReference type="ChEBI" id="CHEBI:29105"/>
    </cofactor>
</comment>
<comment type="pathway">
    <text evidence="1">Glycolipid biosynthesis; lipid IV(A) biosynthesis; lipid IV(A) from (3R)-3-hydroxytetradecanoyl-[acyl-carrier-protein] and UDP-N-acetyl-alpha-D-glucosamine: step 2/6.</text>
</comment>
<comment type="similarity">
    <text evidence="1">Belongs to the LpxC family.</text>
</comment>
<gene>
    <name evidence="1" type="primary">lpxC</name>
    <name type="ordered locus">ECIAI39_0099</name>
</gene>